<evidence type="ECO:0000255" key="1">
    <source>
        <dbReference type="HAMAP-Rule" id="MF_00291"/>
    </source>
</evidence>
<evidence type="ECO:0000305" key="2"/>
<name>RS2_ALIFM</name>
<gene>
    <name evidence="1" type="primary">rpsB</name>
    <name type="ordered locus">VFMJ11_2096</name>
</gene>
<reference key="1">
    <citation type="submission" date="2008-08" db="EMBL/GenBank/DDBJ databases">
        <title>Complete sequence of Vibrio fischeri strain MJ11.</title>
        <authorList>
            <person name="Mandel M.J."/>
            <person name="Stabb E.V."/>
            <person name="Ruby E.G."/>
            <person name="Ferriera S."/>
            <person name="Johnson J."/>
            <person name="Kravitz S."/>
            <person name="Beeson K."/>
            <person name="Sutton G."/>
            <person name="Rogers Y.-H."/>
            <person name="Friedman R."/>
            <person name="Frazier M."/>
            <person name="Venter J.C."/>
        </authorList>
    </citation>
    <scope>NUCLEOTIDE SEQUENCE [LARGE SCALE GENOMIC DNA]</scope>
    <source>
        <strain>MJ11</strain>
    </source>
</reference>
<sequence length="242" mass="26841">MATVSMRDMLKAGVHFGHQTRYWNPKMKPFIFGARNKVHIINLEQTVPMFNEALAELAKIGSKKGKVLFVGTKRAASEAVKEAAINSDQFYVNNRWLGGMLTNYKTVRQSIKRLKDFEVQSQDGTFEKLTKKEALMRTRDMEKLEKSLGGIKNMNGLPDALFVIDADHEHIAIKEANNLGIPVFAVVDTNSNPDGVDYIIPGNDDAIRAIQLYLNAAADAVKSGRNQDVAAVAEKDGFVEAE</sequence>
<dbReference type="EMBL" id="CP001139">
    <property type="protein sequence ID" value="ACH67266.1"/>
    <property type="molecule type" value="Genomic_DNA"/>
</dbReference>
<dbReference type="RefSeq" id="WP_005420558.1">
    <property type="nucleotide sequence ID" value="NC_011184.1"/>
</dbReference>
<dbReference type="SMR" id="B5F9X6"/>
<dbReference type="GeneID" id="54164658"/>
<dbReference type="KEGG" id="vfm:VFMJ11_2096"/>
<dbReference type="HOGENOM" id="CLU_040318_1_2_6"/>
<dbReference type="Proteomes" id="UP000001857">
    <property type="component" value="Chromosome I"/>
</dbReference>
<dbReference type="GO" id="GO:0022627">
    <property type="term" value="C:cytosolic small ribosomal subunit"/>
    <property type="evidence" value="ECO:0007669"/>
    <property type="project" value="TreeGrafter"/>
</dbReference>
<dbReference type="GO" id="GO:0003735">
    <property type="term" value="F:structural constituent of ribosome"/>
    <property type="evidence" value="ECO:0007669"/>
    <property type="project" value="InterPro"/>
</dbReference>
<dbReference type="GO" id="GO:0006412">
    <property type="term" value="P:translation"/>
    <property type="evidence" value="ECO:0007669"/>
    <property type="project" value="UniProtKB-UniRule"/>
</dbReference>
<dbReference type="CDD" id="cd01425">
    <property type="entry name" value="RPS2"/>
    <property type="match status" value="1"/>
</dbReference>
<dbReference type="FunFam" id="1.10.287.610:FF:000001">
    <property type="entry name" value="30S ribosomal protein S2"/>
    <property type="match status" value="1"/>
</dbReference>
<dbReference type="Gene3D" id="3.40.50.10490">
    <property type="entry name" value="Glucose-6-phosphate isomerase like protein, domain 1"/>
    <property type="match status" value="1"/>
</dbReference>
<dbReference type="Gene3D" id="1.10.287.610">
    <property type="entry name" value="Helix hairpin bin"/>
    <property type="match status" value="1"/>
</dbReference>
<dbReference type="HAMAP" id="MF_00291_B">
    <property type="entry name" value="Ribosomal_uS2_B"/>
    <property type="match status" value="1"/>
</dbReference>
<dbReference type="InterPro" id="IPR001865">
    <property type="entry name" value="Ribosomal_uS2"/>
</dbReference>
<dbReference type="InterPro" id="IPR005706">
    <property type="entry name" value="Ribosomal_uS2_bac/mit/plastid"/>
</dbReference>
<dbReference type="InterPro" id="IPR018130">
    <property type="entry name" value="Ribosomal_uS2_CS"/>
</dbReference>
<dbReference type="InterPro" id="IPR023591">
    <property type="entry name" value="Ribosomal_uS2_flav_dom_sf"/>
</dbReference>
<dbReference type="NCBIfam" id="TIGR01011">
    <property type="entry name" value="rpsB_bact"/>
    <property type="match status" value="1"/>
</dbReference>
<dbReference type="PANTHER" id="PTHR12534">
    <property type="entry name" value="30S RIBOSOMAL PROTEIN S2 PROKARYOTIC AND ORGANELLAR"/>
    <property type="match status" value="1"/>
</dbReference>
<dbReference type="PANTHER" id="PTHR12534:SF0">
    <property type="entry name" value="SMALL RIBOSOMAL SUBUNIT PROTEIN US2M"/>
    <property type="match status" value="1"/>
</dbReference>
<dbReference type="Pfam" id="PF00318">
    <property type="entry name" value="Ribosomal_S2"/>
    <property type="match status" value="1"/>
</dbReference>
<dbReference type="PRINTS" id="PR00395">
    <property type="entry name" value="RIBOSOMALS2"/>
</dbReference>
<dbReference type="SUPFAM" id="SSF52313">
    <property type="entry name" value="Ribosomal protein S2"/>
    <property type="match status" value="1"/>
</dbReference>
<dbReference type="PROSITE" id="PS00962">
    <property type="entry name" value="RIBOSOMAL_S2_1"/>
    <property type="match status" value="1"/>
</dbReference>
<dbReference type="PROSITE" id="PS00963">
    <property type="entry name" value="RIBOSOMAL_S2_2"/>
    <property type="match status" value="1"/>
</dbReference>
<proteinExistence type="inferred from homology"/>
<organism>
    <name type="scientific">Aliivibrio fischeri (strain MJ11)</name>
    <name type="common">Vibrio fischeri</name>
    <dbReference type="NCBI Taxonomy" id="388396"/>
    <lineage>
        <taxon>Bacteria</taxon>
        <taxon>Pseudomonadati</taxon>
        <taxon>Pseudomonadota</taxon>
        <taxon>Gammaproteobacteria</taxon>
        <taxon>Vibrionales</taxon>
        <taxon>Vibrionaceae</taxon>
        <taxon>Aliivibrio</taxon>
    </lineage>
</organism>
<protein>
    <recommendedName>
        <fullName evidence="1">Small ribosomal subunit protein uS2</fullName>
    </recommendedName>
    <alternativeName>
        <fullName evidence="2">30S ribosomal protein S2</fullName>
    </alternativeName>
</protein>
<feature type="chain" id="PRO_1000115073" description="Small ribosomal subunit protein uS2">
    <location>
        <begin position="1"/>
        <end position="242"/>
    </location>
</feature>
<accession>B5F9X6</accession>
<keyword id="KW-0687">Ribonucleoprotein</keyword>
<keyword id="KW-0689">Ribosomal protein</keyword>
<comment type="similarity">
    <text evidence="1">Belongs to the universal ribosomal protein uS2 family.</text>
</comment>